<feature type="chain" id="PRO_0000303579" description="tRNA N6-adenosine threonylcarbamoyltransferase">
    <location>
        <begin position="1"/>
        <end position="337"/>
    </location>
</feature>
<feature type="binding site" evidence="1">
    <location>
        <position position="114"/>
    </location>
    <ligand>
        <name>Fe cation</name>
        <dbReference type="ChEBI" id="CHEBI:24875"/>
    </ligand>
</feature>
<feature type="binding site" evidence="1">
    <location>
        <position position="118"/>
    </location>
    <ligand>
        <name>Fe cation</name>
        <dbReference type="ChEBI" id="CHEBI:24875"/>
    </ligand>
</feature>
<feature type="binding site" evidence="1">
    <location>
        <begin position="136"/>
        <end position="140"/>
    </location>
    <ligand>
        <name>substrate</name>
    </ligand>
</feature>
<feature type="binding site" evidence="1">
    <location>
        <position position="169"/>
    </location>
    <ligand>
        <name>substrate</name>
    </ligand>
</feature>
<feature type="binding site" evidence="1">
    <location>
        <position position="182"/>
    </location>
    <ligand>
        <name>substrate</name>
    </ligand>
</feature>
<feature type="binding site" evidence="1">
    <location>
        <position position="186"/>
    </location>
    <ligand>
        <name>substrate</name>
    </ligand>
</feature>
<feature type="binding site" evidence="1">
    <location>
        <position position="275"/>
    </location>
    <ligand>
        <name>substrate</name>
    </ligand>
</feature>
<feature type="binding site" evidence="1">
    <location>
        <position position="301"/>
    </location>
    <ligand>
        <name>Fe cation</name>
        <dbReference type="ChEBI" id="CHEBI:24875"/>
    </ligand>
</feature>
<proteinExistence type="inferred from homology"/>
<evidence type="ECO:0000255" key="1">
    <source>
        <dbReference type="HAMAP-Rule" id="MF_01445"/>
    </source>
</evidence>
<keyword id="KW-0012">Acyltransferase</keyword>
<keyword id="KW-0963">Cytoplasm</keyword>
<keyword id="KW-0408">Iron</keyword>
<keyword id="KW-0479">Metal-binding</keyword>
<keyword id="KW-0808">Transferase</keyword>
<keyword id="KW-0819">tRNA processing</keyword>
<protein>
    <recommendedName>
        <fullName evidence="1">tRNA N6-adenosine threonylcarbamoyltransferase</fullName>
        <ecNumber evidence="1">2.3.1.234</ecNumber>
    </recommendedName>
    <alternativeName>
        <fullName evidence="1">N6-L-threonylcarbamoyladenine synthase</fullName>
        <shortName evidence="1">t(6)A synthase</shortName>
    </alternativeName>
    <alternativeName>
        <fullName evidence="1">t(6)A37 threonylcarbamoyladenosine biosynthesis protein TsaD</fullName>
    </alternativeName>
    <alternativeName>
        <fullName evidence="1">tRNA threonylcarbamoyladenosine biosynthesis protein TsaD</fullName>
    </alternativeName>
</protein>
<comment type="function">
    <text evidence="1">Required for the formation of a threonylcarbamoyl group on adenosine at position 37 (t(6)A37) in tRNAs that read codons beginning with adenine. Is involved in the transfer of the threonylcarbamoyl moiety of threonylcarbamoyl-AMP (TC-AMP) to the N6 group of A37, together with TsaE and TsaB. TsaD likely plays a direct catalytic role in this reaction.</text>
</comment>
<comment type="catalytic activity">
    <reaction evidence="1">
        <text>L-threonylcarbamoyladenylate + adenosine(37) in tRNA = N(6)-L-threonylcarbamoyladenosine(37) in tRNA + AMP + H(+)</text>
        <dbReference type="Rhea" id="RHEA:37059"/>
        <dbReference type="Rhea" id="RHEA-COMP:10162"/>
        <dbReference type="Rhea" id="RHEA-COMP:10163"/>
        <dbReference type="ChEBI" id="CHEBI:15378"/>
        <dbReference type="ChEBI" id="CHEBI:73682"/>
        <dbReference type="ChEBI" id="CHEBI:74411"/>
        <dbReference type="ChEBI" id="CHEBI:74418"/>
        <dbReference type="ChEBI" id="CHEBI:456215"/>
        <dbReference type="EC" id="2.3.1.234"/>
    </reaction>
</comment>
<comment type="cofactor">
    <cofactor evidence="1">
        <name>Fe(2+)</name>
        <dbReference type="ChEBI" id="CHEBI:29033"/>
    </cofactor>
    <text evidence="1">Binds 1 Fe(2+) ion per subunit.</text>
</comment>
<comment type="subcellular location">
    <subcellularLocation>
        <location evidence="1">Cytoplasm</location>
    </subcellularLocation>
</comment>
<comment type="similarity">
    <text evidence="1">Belongs to the KAE1 / TsaD family.</text>
</comment>
<gene>
    <name evidence="1" type="primary">tsaD</name>
    <name type="synonym">gcp</name>
    <name type="ordered locus">str1770</name>
</gene>
<dbReference type="EC" id="2.3.1.234" evidence="1"/>
<dbReference type="EMBL" id="CP000024">
    <property type="protein sequence ID" value="AAV63288.1"/>
    <property type="molecule type" value="Genomic_DNA"/>
</dbReference>
<dbReference type="RefSeq" id="WP_002951922.1">
    <property type="nucleotide sequence ID" value="NC_006449.1"/>
</dbReference>
<dbReference type="SMR" id="Q5LY32"/>
<dbReference type="GeneID" id="66899505"/>
<dbReference type="KEGG" id="stc:str1770"/>
<dbReference type="HOGENOM" id="CLU_023208_0_1_9"/>
<dbReference type="GO" id="GO:0005737">
    <property type="term" value="C:cytoplasm"/>
    <property type="evidence" value="ECO:0007669"/>
    <property type="project" value="UniProtKB-SubCell"/>
</dbReference>
<dbReference type="GO" id="GO:0005506">
    <property type="term" value="F:iron ion binding"/>
    <property type="evidence" value="ECO:0007669"/>
    <property type="project" value="UniProtKB-UniRule"/>
</dbReference>
<dbReference type="GO" id="GO:0061711">
    <property type="term" value="F:N(6)-L-threonylcarbamoyladenine synthase activity"/>
    <property type="evidence" value="ECO:0007669"/>
    <property type="project" value="UniProtKB-EC"/>
</dbReference>
<dbReference type="GO" id="GO:0002949">
    <property type="term" value="P:tRNA threonylcarbamoyladenosine modification"/>
    <property type="evidence" value="ECO:0007669"/>
    <property type="project" value="UniProtKB-UniRule"/>
</dbReference>
<dbReference type="CDD" id="cd24133">
    <property type="entry name" value="ASKHA_NBD_TsaD_bac"/>
    <property type="match status" value="1"/>
</dbReference>
<dbReference type="FunFam" id="3.30.420.40:FF:000012">
    <property type="entry name" value="tRNA N6-adenosine threonylcarbamoyltransferase"/>
    <property type="match status" value="1"/>
</dbReference>
<dbReference type="FunFam" id="3.30.420.40:FF:000040">
    <property type="entry name" value="tRNA N6-adenosine threonylcarbamoyltransferase"/>
    <property type="match status" value="1"/>
</dbReference>
<dbReference type="Gene3D" id="3.30.420.40">
    <property type="match status" value="2"/>
</dbReference>
<dbReference type="HAMAP" id="MF_01445">
    <property type="entry name" value="TsaD"/>
    <property type="match status" value="1"/>
</dbReference>
<dbReference type="InterPro" id="IPR043129">
    <property type="entry name" value="ATPase_NBD"/>
</dbReference>
<dbReference type="InterPro" id="IPR000905">
    <property type="entry name" value="Gcp-like_dom"/>
</dbReference>
<dbReference type="InterPro" id="IPR017861">
    <property type="entry name" value="KAE1/TsaD"/>
</dbReference>
<dbReference type="InterPro" id="IPR017860">
    <property type="entry name" value="Peptidase_M22_CS"/>
</dbReference>
<dbReference type="InterPro" id="IPR022450">
    <property type="entry name" value="TsaD"/>
</dbReference>
<dbReference type="NCBIfam" id="TIGR00329">
    <property type="entry name" value="gcp_kae1"/>
    <property type="match status" value="1"/>
</dbReference>
<dbReference type="NCBIfam" id="TIGR03723">
    <property type="entry name" value="T6A_TsaD_YgjD"/>
    <property type="match status" value="1"/>
</dbReference>
<dbReference type="PANTHER" id="PTHR11735">
    <property type="entry name" value="TRNA N6-ADENOSINE THREONYLCARBAMOYLTRANSFERASE"/>
    <property type="match status" value="1"/>
</dbReference>
<dbReference type="PANTHER" id="PTHR11735:SF6">
    <property type="entry name" value="TRNA N6-ADENOSINE THREONYLCARBAMOYLTRANSFERASE, MITOCHONDRIAL"/>
    <property type="match status" value="1"/>
</dbReference>
<dbReference type="Pfam" id="PF00814">
    <property type="entry name" value="TsaD"/>
    <property type="match status" value="1"/>
</dbReference>
<dbReference type="PRINTS" id="PR00789">
    <property type="entry name" value="OSIALOPTASE"/>
</dbReference>
<dbReference type="SUPFAM" id="SSF53067">
    <property type="entry name" value="Actin-like ATPase domain"/>
    <property type="match status" value="1"/>
</dbReference>
<dbReference type="PROSITE" id="PS01016">
    <property type="entry name" value="GLYCOPROTEASE"/>
    <property type="match status" value="1"/>
</dbReference>
<name>TSAD_STRT1</name>
<accession>Q5LY32</accession>
<organism>
    <name type="scientific">Streptococcus thermophilus (strain CNRZ 1066)</name>
    <dbReference type="NCBI Taxonomy" id="299768"/>
    <lineage>
        <taxon>Bacteria</taxon>
        <taxon>Bacillati</taxon>
        <taxon>Bacillota</taxon>
        <taxon>Bacilli</taxon>
        <taxon>Lactobacillales</taxon>
        <taxon>Streptococcaceae</taxon>
        <taxon>Streptococcus</taxon>
    </lineage>
</organism>
<reference key="1">
    <citation type="journal article" date="2004" name="Nat. Biotechnol.">
        <title>Complete sequence and comparative genome analysis of the dairy bacterium Streptococcus thermophilus.</title>
        <authorList>
            <person name="Bolotin A."/>
            <person name="Quinquis B."/>
            <person name="Renault P."/>
            <person name="Sorokin A."/>
            <person name="Ehrlich S.D."/>
            <person name="Kulakauskas S."/>
            <person name="Lapidus A."/>
            <person name="Goltsman E."/>
            <person name="Mazur M."/>
            <person name="Pusch G.D."/>
            <person name="Fonstein M."/>
            <person name="Overbeek R."/>
            <person name="Kyprides N."/>
            <person name="Purnelle B."/>
            <person name="Prozzi D."/>
            <person name="Ngui K."/>
            <person name="Masuy D."/>
            <person name="Hancy F."/>
            <person name="Burteau S."/>
            <person name="Boutry M."/>
            <person name="Delcour J."/>
            <person name="Goffeau A."/>
            <person name="Hols P."/>
        </authorList>
    </citation>
    <scope>NUCLEOTIDE SEQUENCE [LARGE SCALE GENOMIC DNA]</scope>
    <source>
        <strain>CNRZ 1066</strain>
    </source>
</reference>
<sequence length="337" mass="36206">MADRYILAVESSCDETSVAVLKNEKELLSNIIASQVESHKRFGGVVPEVASRHHVEVVTLCIKDALSEAGIVAEQLDAVAVTYGPGLVGALLVGMAAAKAFAWAHGLPLIPVNHMAGHLMAAREVQELEYPLLALLVSGGHTELVYVSEPGNYKIVGETRDDAVGEAYDKVGRVMGLTYPAGREIDELAHKGKDVYDFPRAMIKEDHLEFSFSGLKSAFINLHHNAEQKGEVLVTEDLCASFQAAVLDILLAKTKKALERYPVKTLVVAGGVAANQGLRERLAEEITDVDVVIPPLRLCGDNAGMIALAAAIECDKKHFADLDLNAKPSLAFAGFEE</sequence>